<sequence>MKTILAVETSCDETAVAIVNSDKQVLAHEILSQAEHKKRGGVIPEIASRAHMEHLSGLIKSAVEKSNLNFCDLNAIAATSGPGLIGGLIVGTMMAKAIAHVAQKPFIAVNHLEAHALVIRLLHEVKFPFLVLLISGGHCQFLIAQDVGKYIKLGETLDDSLGEAFDKVAKMLGLSYPGGPLIEKLAKKGNGARFKLPRAMIKRYGCNFSFSGIKTAVKNLVQELKMSEQDVCDVCASFQECISDILLDRVSNAIIMAESLNIKINDFVITGGVAANNFLREKLKQHINLNIFFPPNDLCTDNAIMVGWTGIERLQKNYIDPLNFAPRPKWELESY</sequence>
<gene>
    <name evidence="1" type="primary">tsaD</name>
    <name type="synonym">gcp</name>
    <name type="ordered locus">WRi_006430</name>
</gene>
<organism>
    <name type="scientific">Wolbachia sp. subsp. Drosophila simulans (strain wRi)</name>
    <dbReference type="NCBI Taxonomy" id="66084"/>
    <lineage>
        <taxon>Bacteria</taxon>
        <taxon>Pseudomonadati</taxon>
        <taxon>Pseudomonadota</taxon>
        <taxon>Alphaproteobacteria</taxon>
        <taxon>Rickettsiales</taxon>
        <taxon>Anaplasmataceae</taxon>
        <taxon>Wolbachieae</taxon>
        <taxon>Wolbachia</taxon>
    </lineage>
</organism>
<keyword id="KW-0012">Acyltransferase</keyword>
<keyword id="KW-0963">Cytoplasm</keyword>
<keyword id="KW-0408">Iron</keyword>
<keyword id="KW-0479">Metal-binding</keyword>
<keyword id="KW-0808">Transferase</keyword>
<keyword id="KW-0819">tRNA processing</keyword>
<comment type="function">
    <text evidence="1">Required for the formation of a threonylcarbamoyl group on adenosine at position 37 (t(6)A37) in tRNAs that read codons beginning with adenine. Is involved in the transfer of the threonylcarbamoyl moiety of threonylcarbamoyl-AMP (TC-AMP) to the N6 group of A37, together with TsaE and TsaB. TsaD likely plays a direct catalytic role in this reaction.</text>
</comment>
<comment type="catalytic activity">
    <reaction evidence="1">
        <text>L-threonylcarbamoyladenylate + adenosine(37) in tRNA = N(6)-L-threonylcarbamoyladenosine(37) in tRNA + AMP + H(+)</text>
        <dbReference type="Rhea" id="RHEA:37059"/>
        <dbReference type="Rhea" id="RHEA-COMP:10162"/>
        <dbReference type="Rhea" id="RHEA-COMP:10163"/>
        <dbReference type="ChEBI" id="CHEBI:15378"/>
        <dbReference type="ChEBI" id="CHEBI:73682"/>
        <dbReference type="ChEBI" id="CHEBI:74411"/>
        <dbReference type="ChEBI" id="CHEBI:74418"/>
        <dbReference type="ChEBI" id="CHEBI:456215"/>
        <dbReference type="EC" id="2.3.1.234"/>
    </reaction>
</comment>
<comment type="cofactor">
    <cofactor evidence="1">
        <name>Fe(2+)</name>
        <dbReference type="ChEBI" id="CHEBI:29033"/>
    </cofactor>
    <text evidence="1">Binds 1 Fe(2+) ion per subunit.</text>
</comment>
<comment type="subcellular location">
    <subcellularLocation>
        <location evidence="1">Cytoplasm</location>
    </subcellularLocation>
</comment>
<comment type="similarity">
    <text evidence="1">Belongs to the KAE1 / TsaD family.</text>
</comment>
<evidence type="ECO:0000255" key="1">
    <source>
        <dbReference type="HAMAP-Rule" id="MF_01445"/>
    </source>
</evidence>
<feature type="chain" id="PRO_1000184993" description="tRNA N6-adenosine threonylcarbamoyltransferase">
    <location>
        <begin position="1"/>
        <end position="335"/>
    </location>
</feature>
<feature type="binding site" evidence="1">
    <location>
        <position position="111"/>
    </location>
    <ligand>
        <name>Fe cation</name>
        <dbReference type="ChEBI" id="CHEBI:24875"/>
    </ligand>
</feature>
<feature type="binding site" evidence="1">
    <location>
        <position position="115"/>
    </location>
    <ligand>
        <name>Fe cation</name>
        <dbReference type="ChEBI" id="CHEBI:24875"/>
    </ligand>
</feature>
<feature type="binding site" evidence="1">
    <location>
        <begin position="133"/>
        <end position="137"/>
    </location>
    <ligand>
        <name>substrate</name>
    </ligand>
</feature>
<feature type="binding site" evidence="1">
    <location>
        <position position="166"/>
    </location>
    <ligand>
        <name>substrate</name>
    </ligand>
</feature>
<feature type="binding site" evidence="1">
    <location>
        <position position="179"/>
    </location>
    <ligand>
        <name>substrate</name>
    </ligand>
</feature>
<feature type="binding site" evidence="1">
    <location>
        <position position="276"/>
    </location>
    <ligand>
        <name>substrate</name>
    </ligand>
</feature>
<feature type="binding site" evidence="1">
    <location>
        <position position="301"/>
    </location>
    <ligand>
        <name>Fe cation</name>
        <dbReference type="ChEBI" id="CHEBI:24875"/>
    </ligand>
</feature>
<accession>C0R3B8</accession>
<reference key="1">
    <citation type="journal article" date="2009" name="Proc. Natl. Acad. Sci. U.S.A.">
        <title>The mosaic genome structure of the Wolbachia wRi strain infecting Drosophila simulans.</title>
        <authorList>
            <person name="Klasson L."/>
            <person name="Westberg J."/>
            <person name="Sapountzis P."/>
            <person name="Naeslund K."/>
            <person name="Lutnaes Y."/>
            <person name="Darby A.C."/>
            <person name="Veneti Z."/>
            <person name="Chen L."/>
            <person name="Braig H.R."/>
            <person name="Garrett R."/>
            <person name="Bourtzis K."/>
            <person name="Andersson S.G."/>
        </authorList>
    </citation>
    <scope>NUCLEOTIDE SEQUENCE [LARGE SCALE GENOMIC DNA]</scope>
    <source>
        <strain>wRi</strain>
    </source>
</reference>
<name>TSAD_WOLWR</name>
<dbReference type="EC" id="2.3.1.234" evidence="1"/>
<dbReference type="EMBL" id="CP001391">
    <property type="protein sequence ID" value="ACN95410.1"/>
    <property type="molecule type" value="Genomic_DNA"/>
</dbReference>
<dbReference type="RefSeq" id="WP_006280520.1">
    <property type="nucleotide sequence ID" value="NZ_MKIF01000021.1"/>
</dbReference>
<dbReference type="SMR" id="C0R3B8"/>
<dbReference type="STRING" id="66084.WRi_006430"/>
<dbReference type="KEGG" id="wri:WRi_006430"/>
<dbReference type="HOGENOM" id="CLU_023208_0_2_5"/>
<dbReference type="Proteomes" id="UP000001293">
    <property type="component" value="Chromosome"/>
</dbReference>
<dbReference type="GO" id="GO:0005737">
    <property type="term" value="C:cytoplasm"/>
    <property type="evidence" value="ECO:0007669"/>
    <property type="project" value="UniProtKB-SubCell"/>
</dbReference>
<dbReference type="GO" id="GO:0005506">
    <property type="term" value="F:iron ion binding"/>
    <property type="evidence" value="ECO:0007669"/>
    <property type="project" value="UniProtKB-UniRule"/>
</dbReference>
<dbReference type="GO" id="GO:0061711">
    <property type="term" value="F:N(6)-L-threonylcarbamoyladenine synthase activity"/>
    <property type="evidence" value="ECO:0007669"/>
    <property type="project" value="UniProtKB-EC"/>
</dbReference>
<dbReference type="GO" id="GO:0002949">
    <property type="term" value="P:tRNA threonylcarbamoyladenosine modification"/>
    <property type="evidence" value="ECO:0007669"/>
    <property type="project" value="UniProtKB-UniRule"/>
</dbReference>
<dbReference type="CDD" id="cd24133">
    <property type="entry name" value="ASKHA_NBD_TsaD_bac"/>
    <property type="match status" value="1"/>
</dbReference>
<dbReference type="FunFam" id="3.30.420.40:FF:000012">
    <property type="entry name" value="tRNA N6-adenosine threonylcarbamoyltransferase"/>
    <property type="match status" value="1"/>
</dbReference>
<dbReference type="FunFam" id="3.30.420.40:FF:000040">
    <property type="entry name" value="tRNA N6-adenosine threonylcarbamoyltransferase"/>
    <property type="match status" value="1"/>
</dbReference>
<dbReference type="Gene3D" id="3.30.420.40">
    <property type="match status" value="2"/>
</dbReference>
<dbReference type="HAMAP" id="MF_01445">
    <property type="entry name" value="TsaD"/>
    <property type="match status" value="1"/>
</dbReference>
<dbReference type="InterPro" id="IPR043129">
    <property type="entry name" value="ATPase_NBD"/>
</dbReference>
<dbReference type="InterPro" id="IPR000905">
    <property type="entry name" value="Gcp-like_dom"/>
</dbReference>
<dbReference type="InterPro" id="IPR017861">
    <property type="entry name" value="KAE1/TsaD"/>
</dbReference>
<dbReference type="InterPro" id="IPR022450">
    <property type="entry name" value="TsaD"/>
</dbReference>
<dbReference type="NCBIfam" id="TIGR00329">
    <property type="entry name" value="gcp_kae1"/>
    <property type="match status" value="1"/>
</dbReference>
<dbReference type="NCBIfam" id="TIGR03723">
    <property type="entry name" value="T6A_TsaD_YgjD"/>
    <property type="match status" value="1"/>
</dbReference>
<dbReference type="PANTHER" id="PTHR11735">
    <property type="entry name" value="TRNA N6-ADENOSINE THREONYLCARBAMOYLTRANSFERASE"/>
    <property type="match status" value="1"/>
</dbReference>
<dbReference type="PANTHER" id="PTHR11735:SF6">
    <property type="entry name" value="TRNA N6-ADENOSINE THREONYLCARBAMOYLTRANSFERASE, MITOCHONDRIAL"/>
    <property type="match status" value="1"/>
</dbReference>
<dbReference type="Pfam" id="PF00814">
    <property type="entry name" value="TsaD"/>
    <property type="match status" value="1"/>
</dbReference>
<dbReference type="PRINTS" id="PR00789">
    <property type="entry name" value="OSIALOPTASE"/>
</dbReference>
<dbReference type="SUPFAM" id="SSF53067">
    <property type="entry name" value="Actin-like ATPase domain"/>
    <property type="match status" value="1"/>
</dbReference>
<protein>
    <recommendedName>
        <fullName evidence="1">tRNA N6-adenosine threonylcarbamoyltransferase</fullName>
        <ecNumber evidence="1">2.3.1.234</ecNumber>
    </recommendedName>
    <alternativeName>
        <fullName evidence="1">N6-L-threonylcarbamoyladenine synthase</fullName>
        <shortName evidence="1">t(6)A synthase</shortName>
    </alternativeName>
    <alternativeName>
        <fullName evidence="1">t(6)A37 threonylcarbamoyladenosine biosynthesis protein TsaD</fullName>
    </alternativeName>
    <alternativeName>
        <fullName evidence="1">tRNA threonylcarbamoyladenosine biosynthesis protein TsaD</fullName>
    </alternativeName>
</protein>
<proteinExistence type="inferred from homology"/>